<name>RL24_RHIEC</name>
<dbReference type="EMBL" id="CP000133">
    <property type="protein sequence ID" value="ABC90481.1"/>
    <property type="molecule type" value="Genomic_DNA"/>
</dbReference>
<dbReference type="RefSeq" id="WP_004674929.1">
    <property type="nucleotide sequence ID" value="NC_007761.1"/>
</dbReference>
<dbReference type="SMR" id="Q2K9K5"/>
<dbReference type="GeneID" id="91148139"/>
<dbReference type="KEGG" id="ret:RHE_CH01686"/>
<dbReference type="eggNOG" id="COG0198">
    <property type="taxonomic scope" value="Bacteria"/>
</dbReference>
<dbReference type="HOGENOM" id="CLU_093315_2_2_5"/>
<dbReference type="OrthoDB" id="9807419at2"/>
<dbReference type="Proteomes" id="UP000001936">
    <property type="component" value="Chromosome"/>
</dbReference>
<dbReference type="GO" id="GO:1990904">
    <property type="term" value="C:ribonucleoprotein complex"/>
    <property type="evidence" value="ECO:0007669"/>
    <property type="project" value="UniProtKB-KW"/>
</dbReference>
<dbReference type="GO" id="GO:0005840">
    <property type="term" value="C:ribosome"/>
    <property type="evidence" value="ECO:0007669"/>
    <property type="project" value="UniProtKB-KW"/>
</dbReference>
<dbReference type="GO" id="GO:0019843">
    <property type="term" value="F:rRNA binding"/>
    <property type="evidence" value="ECO:0007669"/>
    <property type="project" value="UniProtKB-UniRule"/>
</dbReference>
<dbReference type="GO" id="GO:0003735">
    <property type="term" value="F:structural constituent of ribosome"/>
    <property type="evidence" value="ECO:0007669"/>
    <property type="project" value="InterPro"/>
</dbReference>
<dbReference type="GO" id="GO:0006412">
    <property type="term" value="P:translation"/>
    <property type="evidence" value="ECO:0007669"/>
    <property type="project" value="UniProtKB-UniRule"/>
</dbReference>
<dbReference type="CDD" id="cd06089">
    <property type="entry name" value="KOW_RPL26"/>
    <property type="match status" value="1"/>
</dbReference>
<dbReference type="FunFam" id="2.30.30.30:FF:000004">
    <property type="entry name" value="50S ribosomal protein L24"/>
    <property type="match status" value="1"/>
</dbReference>
<dbReference type="Gene3D" id="2.30.30.30">
    <property type="match status" value="1"/>
</dbReference>
<dbReference type="HAMAP" id="MF_01326_B">
    <property type="entry name" value="Ribosomal_uL24_B"/>
    <property type="match status" value="1"/>
</dbReference>
<dbReference type="InterPro" id="IPR005824">
    <property type="entry name" value="KOW"/>
</dbReference>
<dbReference type="InterPro" id="IPR014722">
    <property type="entry name" value="Rib_uL2_dom2"/>
</dbReference>
<dbReference type="InterPro" id="IPR003256">
    <property type="entry name" value="Ribosomal_uL24"/>
</dbReference>
<dbReference type="InterPro" id="IPR041988">
    <property type="entry name" value="Ribosomal_uL24_KOW"/>
</dbReference>
<dbReference type="InterPro" id="IPR008991">
    <property type="entry name" value="Translation_prot_SH3-like_sf"/>
</dbReference>
<dbReference type="NCBIfam" id="TIGR01079">
    <property type="entry name" value="rplX_bact"/>
    <property type="match status" value="1"/>
</dbReference>
<dbReference type="PANTHER" id="PTHR12903">
    <property type="entry name" value="MITOCHONDRIAL RIBOSOMAL PROTEIN L24"/>
    <property type="match status" value="1"/>
</dbReference>
<dbReference type="Pfam" id="PF00467">
    <property type="entry name" value="KOW"/>
    <property type="match status" value="1"/>
</dbReference>
<dbReference type="Pfam" id="PF17136">
    <property type="entry name" value="ribosomal_L24"/>
    <property type="match status" value="1"/>
</dbReference>
<dbReference type="SMART" id="SM00739">
    <property type="entry name" value="KOW"/>
    <property type="match status" value="1"/>
</dbReference>
<dbReference type="SUPFAM" id="SSF50104">
    <property type="entry name" value="Translation proteins SH3-like domain"/>
    <property type="match status" value="1"/>
</dbReference>
<gene>
    <name evidence="1" type="primary">rplX</name>
    <name type="ordered locus">RHE_CH01686</name>
</gene>
<keyword id="KW-1185">Reference proteome</keyword>
<keyword id="KW-0687">Ribonucleoprotein</keyword>
<keyword id="KW-0689">Ribosomal protein</keyword>
<keyword id="KW-0694">RNA-binding</keyword>
<keyword id="KW-0699">rRNA-binding</keyword>
<organism>
    <name type="scientific">Rhizobium etli (strain ATCC 51251 / DSM 11541 / JCM 21823 / NBRC 15573 / CFN 42)</name>
    <dbReference type="NCBI Taxonomy" id="347834"/>
    <lineage>
        <taxon>Bacteria</taxon>
        <taxon>Pseudomonadati</taxon>
        <taxon>Pseudomonadota</taxon>
        <taxon>Alphaproteobacteria</taxon>
        <taxon>Hyphomicrobiales</taxon>
        <taxon>Rhizobiaceae</taxon>
        <taxon>Rhizobium/Agrobacterium group</taxon>
        <taxon>Rhizobium</taxon>
    </lineage>
</organism>
<evidence type="ECO:0000255" key="1">
    <source>
        <dbReference type="HAMAP-Rule" id="MF_01326"/>
    </source>
</evidence>
<evidence type="ECO:0000305" key="2"/>
<comment type="function">
    <text evidence="1">One of two assembly initiator proteins, it binds directly to the 5'-end of the 23S rRNA, where it nucleates assembly of the 50S subunit.</text>
</comment>
<comment type="function">
    <text evidence="1">One of the proteins that surrounds the polypeptide exit tunnel on the outside of the subunit.</text>
</comment>
<comment type="subunit">
    <text evidence="1">Part of the 50S ribosomal subunit.</text>
</comment>
<comment type="similarity">
    <text evidence="1">Belongs to the universal ribosomal protein uL24 family.</text>
</comment>
<sequence length="102" mass="11209">MQKIRKGDKVVMLAGKDKGRTGEVVQVMPKEDRAVVRGVNVVKRHQRQTQTQEAGIINKEAPVHLSNIAIVDKDGKPTRVGFKVVDGKKVRVAKRSGEVIDG</sequence>
<proteinExistence type="inferred from homology"/>
<accession>Q2K9K5</accession>
<feature type="chain" id="PRO_0000241648" description="Large ribosomal subunit protein uL24">
    <location>
        <begin position="1"/>
        <end position="102"/>
    </location>
</feature>
<reference key="1">
    <citation type="journal article" date="2006" name="Proc. Natl. Acad. Sci. U.S.A.">
        <title>The partitioned Rhizobium etli genome: genetic and metabolic redundancy in seven interacting replicons.</title>
        <authorList>
            <person name="Gonzalez V."/>
            <person name="Santamaria R.I."/>
            <person name="Bustos P."/>
            <person name="Hernandez-Gonzalez I."/>
            <person name="Medrano-Soto A."/>
            <person name="Moreno-Hagelsieb G."/>
            <person name="Janga S.C."/>
            <person name="Ramirez M.A."/>
            <person name="Jimenez-Jacinto V."/>
            <person name="Collado-Vides J."/>
            <person name="Davila G."/>
        </authorList>
    </citation>
    <scope>NUCLEOTIDE SEQUENCE [LARGE SCALE GENOMIC DNA]</scope>
    <source>
        <strain>ATCC 51251 / DSM 11541 / JCM 21823 / NBRC 15573 / CFN 42</strain>
    </source>
</reference>
<protein>
    <recommendedName>
        <fullName evidence="1">Large ribosomal subunit protein uL24</fullName>
    </recommendedName>
    <alternativeName>
        <fullName evidence="2">50S ribosomal protein L24</fullName>
    </alternativeName>
</protein>